<evidence type="ECO:0000255" key="1">
    <source>
        <dbReference type="HAMAP-Rule" id="MF_01705"/>
    </source>
</evidence>
<evidence type="ECO:0000255" key="2">
    <source>
        <dbReference type="PROSITE-ProRule" id="PRU01213"/>
    </source>
</evidence>
<dbReference type="EC" id="7.3.2.5" evidence="1"/>
<dbReference type="EMBL" id="CP000034">
    <property type="protein sequence ID" value="ABB60897.1"/>
    <property type="molecule type" value="Genomic_DNA"/>
</dbReference>
<dbReference type="RefSeq" id="WP_000891685.1">
    <property type="nucleotide sequence ID" value="NC_007606.1"/>
</dbReference>
<dbReference type="RefSeq" id="YP_402386.1">
    <property type="nucleotide sequence ID" value="NC_007606.1"/>
</dbReference>
<dbReference type="SMR" id="Q32IG0"/>
<dbReference type="STRING" id="300267.SDY_0712"/>
<dbReference type="EnsemblBacteria" id="ABB60897">
    <property type="protein sequence ID" value="ABB60897"/>
    <property type="gene ID" value="SDY_0712"/>
</dbReference>
<dbReference type="GeneID" id="75204880"/>
<dbReference type="KEGG" id="sdy:SDY_0712"/>
<dbReference type="PATRIC" id="fig|300267.13.peg.823"/>
<dbReference type="HOGENOM" id="CLU_000604_1_1_6"/>
<dbReference type="Proteomes" id="UP000002716">
    <property type="component" value="Chromosome"/>
</dbReference>
<dbReference type="GO" id="GO:0005886">
    <property type="term" value="C:plasma membrane"/>
    <property type="evidence" value="ECO:0007669"/>
    <property type="project" value="UniProtKB-SubCell"/>
</dbReference>
<dbReference type="GO" id="GO:0015412">
    <property type="term" value="F:ABC-type molybdate transporter activity"/>
    <property type="evidence" value="ECO:0007669"/>
    <property type="project" value="UniProtKB-EC"/>
</dbReference>
<dbReference type="GO" id="GO:0005524">
    <property type="term" value="F:ATP binding"/>
    <property type="evidence" value="ECO:0007669"/>
    <property type="project" value="UniProtKB-KW"/>
</dbReference>
<dbReference type="GO" id="GO:0016887">
    <property type="term" value="F:ATP hydrolysis activity"/>
    <property type="evidence" value="ECO:0007669"/>
    <property type="project" value="InterPro"/>
</dbReference>
<dbReference type="FunFam" id="2.40.50.100:FF:000037">
    <property type="entry name" value="Molybdenum import ATP-binding protein ModC"/>
    <property type="match status" value="1"/>
</dbReference>
<dbReference type="FunFam" id="3.40.50.300:FF:000634">
    <property type="entry name" value="Molybdenum import ATP-binding protein ModC"/>
    <property type="match status" value="1"/>
</dbReference>
<dbReference type="Gene3D" id="2.40.50.100">
    <property type="match status" value="1"/>
</dbReference>
<dbReference type="Gene3D" id="3.40.50.300">
    <property type="entry name" value="P-loop containing nucleotide triphosphate hydrolases"/>
    <property type="match status" value="1"/>
</dbReference>
<dbReference type="InterPro" id="IPR003593">
    <property type="entry name" value="AAA+_ATPase"/>
</dbReference>
<dbReference type="InterPro" id="IPR003439">
    <property type="entry name" value="ABC_transporter-like_ATP-bd"/>
</dbReference>
<dbReference type="InterPro" id="IPR017871">
    <property type="entry name" value="ABC_transporter-like_CS"/>
</dbReference>
<dbReference type="InterPro" id="IPR008995">
    <property type="entry name" value="Mo/tungstate-bd_C_term_dom"/>
</dbReference>
<dbReference type="InterPro" id="IPR011868">
    <property type="entry name" value="ModC_ABC_ATP-bd"/>
</dbReference>
<dbReference type="InterPro" id="IPR050334">
    <property type="entry name" value="Molybdenum_import_ModC"/>
</dbReference>
<dbReference type="InterPro" id="IPR004606">
    <property type="entry name" value="Mop_domain"/>
</dbReference>
<dbReference type="InterPro" id="IPR027417">
    <property type="entry name" value="P-loop_NTPase"/>
</dbReference>
<dbReference type="InterPro" id="IPR005116">
    <property type="entry name" value="Transp-assoc_OB_typ1"/>
</dbReference>
<dbReference type="NCBIfam" id="TIGR02142">
    <property type="entry name" value="modC_ABC"/>
    <property type="match status" value="1"/>
</dbReference>
<dbReference type="NCBIfam" id="TIGR00638">
    <property type="entry name" value="Mop"/>
    <property type="match status" value="1"/>
</dbReference>
<dbReference type="NCBIfam" id="NF008355">
    <property type="entry name" value="PRK11144.1"/>
    <property type="match status" value="1"/>
</dbReference>
<dbReference type="PANTHER" id="PTHR43514">
    <property type="entry name" value="ABC TRANSPORTER I FAMILY MEMBER 10"/>
    <property type="match status" value="1"/>
</dbReference>
<dbReference type="PANTHER" id="PTHR43514:SF4">
    <property type="entry name" value="ABC TRANSPORTER I FAMILY MEMBER 10"/>
    <property type="match status" value="1"/>
</dbReference>
<dbReference type="Pfam" id="PF00005">
    <property type="entry name" value="ABC_tran"/>
    <property type="match status" value="1"/>
</dbReference>
<dbReference type="Pfam" id="PF03459">
    <property type="entry name" value="TOBE"/>
    <property type="match status" value="1"/>
</dbReference>
<dbReference type="SMART" id="SM00382">
    <property type="entry name" value="AAA"/>
    <property type="match status" value="1"/>
</dbReference>
<dbReference type="SUPFAM" id="SSF50331">
    <property type="entry name" value="MOP-like"/>
    <property type="match status" value="1"/>
</dbReference>
<dbReference type="SUPFAM" id="SSF52540">
    <property type="entry name" value="P-loop containing nucleoside triphosphate hydrolases"/>
    <property type="match status" value="1"/>
</dbReference>
<dbReference type="PROSITE" id="PS00211">
    <property type="entry name" value="ABC_TRANSPORTER_1"/>
    <property type="match status" value="1"/>
</dbReference>
<dbReference type="PROSITE" id="PS50893">
    <property type="entry name" value="ABC_TRANSPORTER_2"/>
    <property type="match status" value="1"/>
</dbReference>
<dbReference type="PROSITE" id="PS51241">
    <property type="entry name" value="MODC"/>
    <property type="match status" value="1"/>
</dbReference>
<dbReference type="PROSITE" id="PS51866">
    <property type="entry name" value="MOP"/>
    <property type="match status" value="1"/>
</dbReference>
<feature type="chain" id="PRO_0000271694" description="Molybdenum import ATP-binding protein ModC">
    <location>
        <begin position="1"/>
        <end position="352"/>
    </location>
</feature>
<feature type="domain" description="ABC transporter" evidence="1">
    <location>
        <begin position="1"/>
        <end position="229"/>
    </location>
</feature>
<feature type="domain" description="Mop" evidence="2">
    <location>
        <begin position="289"/>
        <end position="352"/>
    </location>
</feature>
<feature type="binding site" evidence="1">
    <location>
        <begin position="31"/>
        <end position="38"/>
    </location>
    <ligand>
        <name>ATP</name>
        <dbReference type="ChEBI" id="CHEBI:30616"/>
    </ligand>
</feature>
<name>MODC_SHIDS</name>
<organism>
    <name type="scientific">Shigella dysenteriae serotype 1 (strain Sd197)</name>
    <dbReference type="NCBI Taxonomy" id="300267"/>
    <lineage>
        <taxon>Bacteria</taxon>
        <taxon>Pseudomonadati</taxon>
        <taxon>Pseudomonadota</taxon>
        <taxon>Gammaproteobacteria</taxon>
        <taxon>Enterobacterales</taxon>
        <taxon>Enterobacteriaceae</taxon>
        <taxon>Shigella</taxon>
    </lineage>
</organism>
<proteinExistence type="inferred from homology"/>
<sequence>MLELNFSQTLGNHCLTINETLPANGITAIFGVSGAGKTSLINAISGLTRPQKGRIVLNGRVLNDAEKGICLTPEKRRVGYVFQDARLFPHYKVRGNLRYGMAKSMVDQFDKLVALLGIEPLLDRLPGSLSGGEKQRVAIGRALLTAPELLLLDEPLASLDIPRKRELLPYLQRLTREINIPMLYVSHSLDEILHLADRVMVLENGQVKAFGALEEVWGSSVMNPWLPKEQQSSILKVTVLEHHPHYAMTALALGDQHLWVNKLDEPLQAALRIRIQASDVSLVLQPPQQTSIRNVLRAKVVNSYDDNGQVEVELEVGGKTLWARISPWARDELVIKPGLWLYAQIKSVSITA</sequence>
<protein>
    <recommendedName>
        <fullName evidence="1">Molybdenum import ATP-binding protein ModC</fullName>
        <ecNumber evidence="1">7.3.2.5</ecNumber>
    </recommendedName>
</protein>
<accession>Q32IG0</accession>
<gene>
    <name evidence="1" type="primary">modC</name>
    <name type="ordered locus">SDY_0712</name>
</gene>
<comment type="function">
    <text evidence="1">Part of the ABC transporter complex ModABC involved in molybdenum import. Responsible for energy coupling to the transport system.</text>
</comment>
<comment type="catalytic activity">
    <reaction evidence="1">
        <text>molybdate(out) + ATP + H2O = molybdate(in) + ADP + phosphate + H(+)</text>
        <dbReference type="Rhea" id="RHEA:22020"/>
        <dbReference type="ChEBI" id="CHEBI:15377"/>
        <dbReference type="ChEBI" id="CHEBI:15378"/>
        <dbReference type="ChEBI" id="CHEBI:30616"/>
        <dbReference type="ChEBI" id="CHEBI:36264"/>
        <dbReference type="ChEBI" id="CHEBI:43474"/>
        <dbReference type="ChEBI" id="CHEBI:456216"/>
        <dbReference type="EC" id="7.3.2.5"/>
    </reaction>
</comment>
<comment type="subunit">
    <text evidence="1">The complex is composed of two ATP-binding proteins (ModC), two transmembrane proteins (ModB) and a solute-binding protein (ModA).</text>
</comment>
<comment type="subcellular location">
    <subcellularLocation>
        <location evidence="1">Cell inner membrane</location>
        <topology evidence="1">Peripheral membrane protein</topology>
    </subcellularLocation>
</comment>
<comment type="similarity">
    <text evidence="1">Belongs to the ABC transporter superfamily. Molybdate importer (TC 3.A.1.8) family.</text>
</comment>
<keyword id="KW-0067">ATP-binding</keyword>
<keyword id="KW-0997">Cell inner membrane</keyword>
<keyword id="KW-1003">Cell membrane</keyword>
<keyword id="KW-0472">Membrane</keyword>
<keyword id="KW-0500">Molybdenum</keyword>
<keyword id="KW-0547">Nucleotide-binding</keyword>
<keyword id="KW-1185">Reference proteome</keyword>
<keyword id="KW-1278">Translocase</keyword>
<keyword id="KW-0813">Transport</keyword>
<reference key="1">
    <citation type="journal article" date="2005" name="Nucleic Acids Res.">
        <title>Genome dynamics and diversity of Shigella species, the etiologic agents of bacillary dysentery.</title>
        <authorList>
            <person name="Yang F."/>
            <person name="Yang J."/>
            <person name="Zhang X."/>
            <person name="Chen L."/>
            <person name="Jiang Y."/>
            <person name="Yan Y."/>
            <person name="Tang X."/>
            <person name="Wang J."/>
            <person name="Xiong Z."/>
            <person name="Dong J."/>
            <person name="Xue Y."/>
            <person name="Zhu Y."/>
            <person name="Xu X."/>
            <person name="Sun L."/>
            <person name="Chen S."/>
            <person name="Nie H."/>
            <person name="Peng J."/>
            <person name="Xu J."/>
            <person name="Wang Y."/>
            <person name="Yuan Z."/>
            <person name="Wen Y."/>
            <person name="Yao Z."/>
            <person name="Shen Y."/>
            <person name="Qiang B."/>
            <person name="Hou Y."/>
            <person name="Yu J."/>
            <person name="Jin Q."/>
        </authorList>
    </citation>
    <scope>NUCLEOTIDE SEQUENCE [LARGE SCALE GENOMIC DNA]</scope>
    <source>
        <strain>Sd197</strain>
    </source>
</reference>